<protein>
    <recommendedName>
        <fullName>Putative fatty acid oxidation complex trifunctional enzyme</fullName>
    </recommendedName>
    <domain>
        <recommendedName>
            <fullName>3-hydroxyacyl-CoA dehydrogenase</fullName>
            <ecNumber>1.1.1.35</ecNumber>
        </recommendedName>
    </domain>
    <domain>
        <recommendedName>
            <fullName>Enoyl-CoA hydratase/Delta(3)-cis-Delta(2)-trans-enoyl-CoA isomerase</fullName>
            <ecNumber>4.2.1.17</ecNumber>
            <ecNumber>5.3.3.8</ecNumber>
        </recommendedName>
    </domain>
</protein>
<gene>
    <name type="ordered locus">RP560</name>
</gene>
<evidence type="ECO:0000305" key="1"/>
<accession>Q9ZCZ1</accession>
<dbReference type="EC" id="1.1.1.35"/>
<dbReference type="EC" id="4.2.1.17"/>
<dbReference type="EC" id="5.3.3.8"/>
<dbReference type="EMBL" id="AJ235272">
    <property type="protein sequence ID" value="CAA15008.1"/>
    <property type="molecule type" value="Genomic_DNA"/>
</dbReference>
<dbReference type="PIR" id="F71660">
    <property type="entry name" value="F71660"/>
</dbReference>
<dbReference type="RefSeq" id="NP_220931.1">
    <property type="nucleotide sequence ID" value="NC_000963.1"/>
</dbReference>
<dbReference type="RefSeq" id="WP_004599039.1">
    <property type="nucleotide sequence ID" value="NC_000963.1"/>
</dbReference>
<dbReference type="SMR" id="Q9ZCZ1"/>
<dbReference type="STRING" id="272947.gene:17555640"/>
<dbReference type="EnsemblBacteria" id="CAA15008">
    <property type="protein sequence ID" value="CAA15008"/>
    <property type="gene ID" value="CAA15008"/>
</dbReference>
<dbReference type="KEGG" id="rpr:RP560"/>
<dbReference type="PATRIC" id="fig|272947.5.peg.573"/>
<dbReference type="eggNOG" id="COG1024">
    <property type="taxonomic scope" value="Bacteria"/>
</dbReference>
<dbReference type="eggNOG" id="COG1250">
    <property type="taxonomic scope" value="Bacteria"/>
</dbReference>
<dbReference type="HOGENOM" id="CLU_010448_0_0_5"/>
<dbReference type="OrthoDB" id="5389341at2"/>
<dbReference type="Proteomes" id="UP000002480">
    <property type="component" value="Chromosome"/>
</dbReference>
<dbReference type="GO" id="GO:0003857">
    <property type="term" value="F:3-hydroxyacyl-CoA dehydrogenase activity"/>
    <property type="evidence" value="ECO:0007669"/>
    <property type="project" value="UniProtKB-EC"/>
</dbReference>
<dbReference type="GO" id="GO:0004165">
    <property type="term" value="F:delta(3)-delta(2)-enoyl-CoA isomerase activity"/>
    <property type="evidence" value="ECO:0007669"/>
    <property type="project" value="UniProtKB-EC"/>
</dbReference>
<dbReference type="GO" id="GO:0004300">
    <property type="term" value="F:enoyl-CoA hydratase activity"/>
    <property type="evidence" value="ECO:0007669"/>
    <property type="project" value="UniProtKB-EC"/>
</dbReference>
<dbReference type="GO" id="GO:0070403">
    <property type="term" value="F:NAD+ binding"/>
    <property type="evidence" value="ECO:0007669"/>
    <property type="project" value="InterPro"/>
</dbReference>
<dbReference type="GO" id="GO:0009056">
    <property type="term" value="P:catabolic process"/>
    <property type="evidence" value="ECO:0007669"/>
    <property type="project" value="UniProtKB-ARBA"/>
</dbReference>
<dbReference type="GO" id="GO:0006631">
    <property type="term" value="P:fatty acid metabolic process"/>
    <property type="evidence" value="ECO:0007669"/>
    <property type="project" value="UniProtKB-KW"/>
</dbReference>
<dbReference type="CDD" id="cd06558">
    <property type="entry name" value="crotonase-like"/>
    <property type="match status" value="1"/>
</dbReference>
<dbReference type="Gene3D" id="1.10.1040.50">
    <property type="match status" value="1"/>
</dbReference>
<dbReference type="Gene3D" id="3.90.226.10">
    <property type="entry name" value="2-enoyl-CoA Hydratase, Chain A, domain 1"/>
    <property type="match status" value="1"/>
</dbReference>
<dbReference type="Gene3D" id="3.40.50.720">
    <property type="entry name" value="NAD(P)-binding Rossmann-like Domain"/>
    <property type="match status" value="1"/>
</dbReference>
<dbReference type="InterPro" id="IPR006176">
    <property type="entry name" value="3-OHacyl-CoA_DH_NAD-bd"/>
</dbReference>
<dbReference type="InterPro" id="IPR006108">
    <property type="entry name" value="3HC_DH_C"/>
</dbReference>
<dbReference type="InterPro" id="IPR008927">
    <property type="entry name" value="6-PGluconate_DH-like_C_sf"/>
</dbReference>
<dbReference type="InterPro" id="IPR029045">
    <property type="entry name" value="ClpP/crotonase-like_dom_sf"/>
</dbReference>
<dbReference type="InterPro" id="IPR045004">
    <property type="entry name" value="ECH_dom"/>
</dbReference>
<dbReference type="InterPro" id="IPR036291">
    <property type="entry name" value="NAD(P)-bd_dom_sf"/>
</dbReference>
<dbReference type="PANTHER" id="PTHR48075">
    <property type="entry name" value="3-HYDROXYACYL-COA DEHYDROGENASE FAMILY PROTEIN"/>
    <property type="match status" value="1"/>
</dbReference>
<dbReference type="PANTHER" id="PTHR48075:SF7">
    <property type="entry name" value="3-HYDROXYACYL-COA DEHYDROGENASE-RELATED"/>
    <property type="match status" value="1"/>
</dbReference>
<dbReference type="Pfam" id="PF00725">
    <property type="entry name" value="3HCDH"/>
    <property type="match status" value="1"/>
</dbReference>
<dbReference type="Pfam" id="PF02737">
    <property type="entry name" value="3HCDH_N"/>
    <property type="match status" value="1"/>
</dbReference>
<dbReference type="Pfam" id="PF16113">
    <property type="entry name" value="ECH_2"/>
    <property type="match status" value="1"/>
</dbReference>
<dbReference type="SUPFAM" id="SSF48179">
    <property type="entry name" value="6-phosphogluconate dehydrogenase C-terminal domain-like"/>
    <property type="match status" value="2"/>
</dbReference>
<dbReference type="SUPFAM" id="SSF52096">
    <property type="entry name" value="ClpP/crotonase"/>
    <property type="match status" value="1"/>
</dbReference>
<dbReference type="SUPFAM" id="SSF51735">
    <property type="entry name" value="NAD(P)-binding Rossmann-fold domains"/>
    <property type="match status" value="1"/>
</dbReference>
<organism>
    <name type="scientific">Rickettsia prowazekii (strain Madrid E)</name>
    <dbReference type="NCBI Taxonomy" id="272947"/>
    <lineage>
        <taxon>Bacteria</taxon>
        <taxon>Pseudomonadati</taxon>
        <taxon>Pseudomonadota</taxon>
        <taxon>Alphaproteobacteria</taxon>
        <taxon>Rickettsiales</taxon>
        <taxon>Rickettsiaceae</taxon>
        <taxon>Rickettsieae</taxon>
        <taxon>Rickettsia</taxon>
        <taxon>typhus group</taxon>
    </lineage>
</organism>
<sequence length="720" mass="81403">MQNEIKKVCVIGAGVMGSGIAALIANSSHQVVLLDILDKDSNDPNKIVKNSVKNLHKQKLSPLSFPDKVNFITIGNLEHDLDLIKECNLVIEVIVEKLEIKHQLYNKIIPYLKEDAIIASNTSTLPLKKLKVNLPNNIKSRFVITHFFNPPRYMELVELIIDHTIKDEVIEKVSVFLTKMLGKTIIKCNDTPGFIANRVGCFLLELVVHKAIAQNLNFVTIDQIFSRCLGLPNTGIFGLYDLIGHDVMKLISSSLISALPKSDDYHRIYTNTKVFDKMIEHNLIGRKGEGGFYRLSVSNGKKIKEVINISDLSYHPVQKVDISFNSLNELLSSNSIYGKFFSEIITEFYIYLTSLVPSVTNNIYDIDTTMKLGYSWHYGPFELLTIAVKNGWNLIIKNADLMNIPLPKYLASKEYQKIDKQKFNSKKDFLQESKIVLSNDSANLIHYCENLVFVITTKMNSLNHNVFYLLQEAVSKAENYGKNLYIYPQGNNFSAGADLKLILSYIQDGNFHNLENLLKLGQQTMRYLKYSSVHIISCARGVALGGGCELLLNSSYIVANQELNAGLIELGVGLIPGWTGVTEMFARSNGNKTKLIRNIKNIIEQNKTSSADYFKADYGIKNMQVNMNKHYILDDALKLRISKKIVSIPNKITLPKINIVSEIDTSKYNELQNKVLNKFQNIIDKHNEISEAELLTYEREMFLELAKTPQTIEKLQAIVG</sequence>
<reference key="1">
    <citation type="journal article" date="1998" name="Nature">
        <title>The genome sequence of Rickettsia prowazekii and the origin of mitochondria.</title>
        <authorList>
            <person name="Andersson S.G.E."/>
            <person name="Zomorodipour A."/>
            <person name="Andersson J.O."/>
            <person name="Sicheritz-Ponten T."/>
            <person name="Alsmark U.C.M."/>
            <person name="Podowski R.M."/>
            <person name="Naeslund A.K."/>
            <person name="Eriksson A.-S."/>
            <person name="Winkler H.H."/>
            <person name="Kurland C.G."/>
        </authorList>
    </citation>
    <scope>NUCLEOTIDE SEQUENCE [LARGE SCALE GENOMIC DNA]</scope>
    <source>
        <strain>Madrid E</strain>
    </source>
</reference>
<feature type="chain" id="PRO_0000285698" description="Putative fatty acid oxidation complex trifunctional enzyme">
    <location>
        <begin position="1"/>
        <end position="720"/>
    </location>
</feature>
<feature type="region of interest" description="3-hydroxyacyl-CoA dehydrogenase">
    <location>
        <begin position="1"/>
        <end position="384"/>
    </location>
</feature>
<feature type="region of interest" description="Enoyl-CoA hydratase/isomerase">
    <location>
        <begin position="453"/>
        <end position="720"/>
    </location>
</feature>
<name>FAD3_RICPR</name>
<comment type="catalytic activity">
    <reaction>
        <text>a (3S)-3-hydroxyacyl-CoA + NAD(+) = a 3-oxoacyl-CoA + NADH + H(+)</text>
        <dbReference type="Rhea" id="RHEA:22432"/>
        <dbReference type="ChEBI" id="CHEBI:15378"/>
        <dbReference type="ChEBI" id="CHEBI:57318"/>
        <dbReference type="ChEBI" id="CHEBI:57540"/>
        <dbReference type="ChEBI" id="CHEBI:57945"/>
        <dbReference type="ChEBI" id="CHEBI:90726"/>
        <dbReference type="EC" id="1.1.1.35"/>
    </reaction>
</comment>
<comment type="catalytic activity">
    <reaction>
        <text>a (3S)-3-hydroxyacyl-CoA = a (2E)-enoyl-CoA + H2O</text>
        <dbReference type="Rhea" id="RHEA:16105"/>
        <dbReference type="ChEBI" id="CHEBI:15377"/>
        <dbReference type="ChEBI" id="CHEBI:57318"/>
        <dbReference type="ChEBI" id="CHEBI:58856"/>
        <dbReference type="EC" id="4.2.1.17"/>
    </reaction>
</comment>
<comment type="catalytic activity">
    <reaction>
        <text>a 4-saturated-(3S)-3-hydroxyacyl-CoA = a (3E)-enoyl-CoA + H2O</text>
        <dbReference type="Rhea" id="RHEA:20724"/>
        <dbReference type="ChEBI" id="CHEBI:15377"/>
        <dbReference type="ChEBI" id="CHEBI:58521"/>
        <dbReference type="ChEBI" id="CHEBI:137480"/>
        <dbReference type="EC" id="4.2.1.17"/>
    </reaction>
</comment>
<comment type="catalytic activity">
    <reaction>
        <text>a (3Z)-enoyl-CoA = a 4-saturated (2E)-enoyl-CoA</text>
        <dbReference type="Rhea" id="RHEA:45900"/>
        <dbReference type="ChEBI" id="CHEBI:85097"/>
        <dbReference type="ChEBI" id="CHEBI:85489"/>
        <dbReference type="EC" id="5.3.3.8"/>
    </reaction>
</comment>
<comment type="catalytic activity">
    <reaction>
        <text>a (3E)-enoyl-CoA = a 4-saturated (2E)-enoyl-CoA</text>
        <dbReference type="Rhea" id="RHEA:45228"/>
        <dbReference type="ChEBI" id="CHEBI:58521"/>
        <dbReference type="ChEBI" id="CHEBI:85097"/>
        <dbReference type="EC" id="5.3.3.8"/>
    </reaction>
</comment>
<comment type="similarity">
    <text evidence="1">In the N-terminal section; belongs to the 3-hydroxyacyl-CoA dehydrogenase family.</text>
</comment>
<comment type="similarity">
    <text evidence="1">In the C-terminal section; belongs to the enoyl-CoA hydratase/isomerase family.</text>
</comment>
<keyword id="KW-0276">Fatty acid metabolism</keyword>
<keyword id="KW-0413">Isomerase</keyword>
<keyword id="KW-0443">Lipid metabolism</keyword>
<keyword id="KW-0456">Lyase</keyword>
<keyword id="KW-0511">Multifunctional enzyme</keyword>
<keyword id="KW-0520">NAD</keyword>
<keyword id="KW-0560">Oxidoreductase</keyword>
<keyword id="KW-1185">Reference proteome</keyword>
<proteinExistence type="inferred from homology"/>